<accession>B2TDB3</accession>
<dbReference type="EMBL" id="CP001053">
    <property type="protein sequence ID" value="ACD19624.1"/>
    <property type="molecule type" value="Genomic_DNA"/>
</dbReference>
<dbReference type="RefSeq" id="WP_012427132.1">
    <property type="nucleotide sequence ID" value="NC_010676.1"/>
</dbReference>
<dbReference type="SMR" id="B2TDB3"/>
<dbReference type="STRING" id="398527.Bphyt_5265"/>
<dbReference type="KEGG" id="bpy:Bphyt_5265"/>
<dbReference type="eggNOG" id="COG3132">
    <property type="taxonomic scope" value="Bacteria"/>
</dbReference>
<dbReference type="HOGENOM" id="CLU_057831_0_0_4"/>
<dbReference type="OrthoDB" id="9784785at2"/>
<dbReference type="Proteomes" id="UP000001739">
    <property type="component" value="Chromosome 2"/>
</dbReference>
<dbReference type="Gene3D" id="1.10.10.10">
    <property type="entry name" value="Winged helix-like DNA-binding domain superfamily/Winged helix DNA-binding domain"/>
    <property type="match status" value="2"/>
</dbReference>
<dbReference type="HAMAP" id="MF_01584">
    <property type="entry name" value="UPF0502"/>
    <property type="match status" value="1"/>
</dbReference>
<dbReference type="InterPro" id="IPR007432">
    <property type="entry name" value="DUF480"/>
</dbReference>
<dbReference type="InterPro" id="IPR036388">
    <property type="entry name" value="WH-like_DNA-bd_sf"/>
</dbReference>
<dbReference type="InterPro" id="IPR036390">
    <property type="entry name" value="WH_DNA-bd_sf"/>
</dbReference>
<dbReference type="PANTHER" id="PTHR38768">
    <property type="entry name" value="UPF0502 PROTEIN YCEH"/>
    <property type="match status" value="1"/>
</dbReference>
<dbReference type="PANTHER" id="PTHR38768:SF1">
    <property type="entry name" value="UPF0502 PROTEIN YCEH"/>
    <property type="match status" value="1"/>
</dbReference>
<dbReference type="Pfam" id="PF04337">
    <property type="entry name" value="DUF480"/>
    <property type="match status" value="1"/>
</dbReference>
<dbReference type="SUPFAM" id="SSF46785">
    <property type="entry name" value="Winged helix' DNA-binding domain"/>
    <property type="match status" value="2"/>
</dbReference>
<name>Y5265_PARPJ</name>
<proteinExistence type="inferred from homology"/>
<comment type="similarity">
    <text evidence="1">Belongs to the UPF0502 family.</text>
</comment>
<sequence>MNSTPDASSRPSIRALTLLEGRVLGVLVEKQHTVPDSYPLSLNALTLGCNQKTGRAPVMNATEAEVLTAVDGLKRLSLVMEGSSSRVPRFEHNMNRVLGLPSQSAALLTILLLRGPQTAAELRLNSARLHGFADISSVEAFLDELAANDPPRVVKLARVPGERENRWMHLLCGEVSVSELAQPGDEDDSVPLSAFEAVKAEQKRLADEVSRLQTLVRRMAAELGIDAGDLTAGE</sequence>
<protein>
    <recommendedName>
        <fullName evidence="1">UPF0502 protein Bphyt_5265</fullName>
    </recommendedName>
</protein>
<organism>
    <name type="scientific">Paraburkholderia phytofirmans (strain DSM 17436 / LMG 22146 / PsJN)</name>
    <name type="common">Burkholderia phytofirmans</name>
    <dbReference type="NCBI Taxonomy" id="398527"/>
    <lineage>
        <taxon>Bacteria</taxon>
        <taxon>Pseudomonadati</taxon>
        <taxon>Pseudomonadota</taxon>
        <taxon>Betaproteobacteria</taxon>
        <taxon>Burkholderiales</taxon>
        <taxon>Burkholderiaceae</taxon>
        <taxon>Paraburkholderia</taxon>
    </lineage>
</organism>
<evidence type="ECO:0000255" key="1">
    <source>
        <dbReference type="HAMAP-Rule" id="MF_01584"/>
    </source>
</evidence>
<feature type="chain" id="PRO_1000201237" description="UPF0502 protein Bphyt_5265">
    <location>
        <begin position="1"/>
        <end position="234"/>
    </location>
</feature>
<gene>
    <name type="ordered locus">Bphyt_5265</name>
</gene>
<reference key="1">
    <citation type="journal article" date="2011" name="J. Bacteriol.">
        <title>Complete genome sequence of the plant growth-promoting endophyte Burkholderia phytofirmans strain PsJN.</title>
        <authorList>
            <person name="Weilharter A."/>
            <person name="Mitter B."/>
            <person name="Shin M.V."/>
            <person name="Chain P.S."/>
            <person name="Nowak J."/>
            <person name="Sessitsch A."/>
        </authorList>
    </citation>
    <scope>NUCLEOTIDE SEQUENCE [LARGE SCALE GENOMIC DNA]</scope>
    <source>
        <strain>DSM 17436 / LMG 22146 / PsJN</strain>
    </source>
</reference>